<reference key="1">
    <citation type="journal article" date="2008" name="Nucleic Acids Res.">
        <title>The complete nucleotide sequences of the five genetically distinct plastid genomes of Oenothera, subsection Oenothera: I. Sequence evaluation and plastome evolution.</title>
        <authorList>
            <person name="Greiner S."/>
            <person name="Wang X."/>
            <person name="Rauwolf U."/>
            <person name="Silber M.V."/>
            <person name="Mayer K."/>
            <person name="Meurer J."/>
            <person name="Haberer G."/>
            <person name="Herrmann R.G."/>
        </authorList>
    </citation>
    <scope>NUCLEOTIDE SEQUENCE [LARGE SCALE GENOMIC DNA]</scope>
    <source>
        <strain>cv. Atrovirens</strain>
    </source>
</reference>
<protein>
    <recommendedName>
        <fullName evidence="2">Photosystem II D2 protein</fullName>
        <shortName evidence="2">PSII D2 protein</shortName>
        <ecNumber evidence="2">1.10.3.9</ecNumber>
    </recommendedName>
    <alternativeName>
        <fullName evidence="2">Photosystem Q(A) protein</fullName>
    </alternativeName>
</protein>
<evidence type="ECO:0000250" key="1">
    <source>
        <dbReference type="UniProtKB" id="P56761"/>
    </source>
</evidence>
<evidence type="ECO:0000255" key="2">
    <source>
        <dbReference type="HAMAP-Rule" id="MF_01383"/>
    </source>
</evidence>
<accession>B0Z5C4</accession>
<dbReference type="EC" id="1.10.3.9" evidence="2"/>
<dbReference type="EMBL" id="EU262891">
    <property type="protein sequence ID" value="ABX10117.1"/>
    <property type="molecule type" value="Genomic_DNA"/>
</dbReference>
<dbReference type="RefSeq" id="YP_001687447.1">
    <property type="nucleotide sequence ID" value="NC_010362.1"/>
</dbReference>
<dbReference type="SMR" id="B0Z5C4"/>
<dbReference type="GeneID" id="5955451"/>
<dbReference type="GO" id="GO:0009535">
    <property type="term" value="C:chloroplast thylakoid membrane"/>
    <property type="evidence" value="ECO:0007669"/>
    <property type="project" value="UniProtKB-SubCell"/>
</dbReference>
<dbReference type="GO" id="GO:0009523">
    <property type="term" value="C:photosystem II"/>
    <property type="evidence" value="ECO:0007669"/>
    <property type="project" value="UniProtKB-KW"/>
</dbReference>
<dbReference type="GO" id="GO:0016168">
    <property type="term" value="F:chlorophyll binding"/>
    <property type="evidence" value="ECO:0007669"/>
    <property type="project" value="UniProtKB-UniRule"/>
</dbReference>
<dbReference type="GO" id="GO:0045156">
    <property type="term" value="F:electron transporter, transferring electrons within the cyclic electron transport pathway of photosynthesis activity"/>
    <property type="evidence" value="ECO:0007669"/>
    <property type="project" value="InterPro"/>
</dbReference>
<dbReference type="GO" id="GO:0005506">
    <property type="term" value="F:iron ion binding"/>
    <property type="evidence" value="ECO:0007669"/>
    <property type="project" value="UniProtKB-UniRule"/>
</dbReference>
<dbReference type="GO" id="GO:0010242">
    <property type="term" value="F:oxygen evolving activity"/>
    <property type="evidence" value="ECO:0007669"/>
    <property type="project" value="UniProtKB-EC"/>
</dbReference>
<dbReference type="GO" id="GO:0009772">
    <property type="term" value="P:photosynthetic electron transport in photosystem II"/>
    <property type="evidence" value="ECO:0007669"/>
    <property type="project" value="InterPro"/>
</dbReference>
<dbReference type="CDD" id="cd09288">
    <property type="entry name" value="Photosystem-II_D2"/>
    <property type="match status" value="1"/>
</dbReference>
<dbReference type="FunFam" id="1.20.85.10:FF:000001">
    <property type="entry name" value="photosystem II D2 protein-like"/>
    <property type="match status" value="1"/>
</dbReference>
<dbReference type="Gene3D" id="1.20.85.10">
    <property type="entry name" value="Photosystem II protein D1-like"/>
    <property type="match status" value="1"/>
</dbReference>
<dbReference type="HAMAP" id="MF_01383">
    <property type="entry name" value="PSII_PsbD_D2"/>
    <property type="match status" value="1"/>
</dbReference>
<dbReference type="InterPro" id="IPR055266">
    <property type="entry name" value="D1/D2"/>
</dbReference>
<dbReference type="InterPro" id="IPR036854">
    <property type="entry name" value="Photo_II_D1/D2_sf"/>
</dbReference>
<dbReference type="InterPro" id="IPR000484">
    <property type="entry name" value="Photo_RC_L/M"/>
</dbReference>
<dbReference type="InterPro" id="IPR055265">
    <property type="entry name" value="Photo_RC_L/M_CS"/>
</dbReference>
<dbReference type="InterPro" id="IPR005868">
    <property type="entry name" value="PSII_PsbD/D2"/>
</dbReference>
<dbReference type="NCBIfam" id="TIGR01152">
    <property type="entry name" value="psbD"/>
    <property type="match status" value="1"/>
</dbReference>
<dbReference type="PANTHER" id="PTHR33149:SF57">
    <property type="entry name" value="PHOTOSYSTEM II D2 PROTEIN"/>
    <property type="match status" value="1"/>
</dbReference>
<dbReference type="PANTHER" id="PTHR33149">
    <property type="entry name" value="PHOTOSYSTEM II PROTEIN D1"/>
    <property type="match status" value="1"/>
</dbReference>
<dbReference type="Pfam" id="PF00124">
    <property type="entry name" value="Photo_RC"/>
    <property type="match status" value="1"/>
</dbReference>
<dbReference type="PRINTS" id="PR00256">
    <property type="entry name" value="REACTNCENTRE"/>
</dbReference>
<dbReference type="SUPFAM" id="SSF81483">
    <property type="entry name" value="Bacterial photosystem II reaction centre, L and M subunits"/>
    <property type="match status" value="1"/>
</dbReference>
<dbReference type="PROSITE" id="PS00244">
    <property type="entry name" value="REACTION_CENTER"/>
    <property type="match status" value="1"/>
</dbReference>
<keyword id="KW-0007">Acetylation</keyword>
<keyword id="KW-0148">Chlorophyll</keyword>
<keyword id="KW-0150">Chloroplast</keyword>
<keyword id="KW-0157">Chromophore</keyword>
<keyword id="KW-0249">Electron transport</keyword>
<keyword id="KW-0408">Iron</keyword>
<keyword id="KW-0460">Magnesium</keyword>
<keyword id="KW-0472">Membrane</keyword>
<keyword id="KW-0479">Metal-binding</keyword>
<keyword id="KW-0560">Oxidoreductase</keyword>
<keyword id="KW-0597">Phosphoprotein</keyword>
<keyword id="KW-0602">Photosynthesis</keyword>
<keyword id="KW-0604">Photosystem II</keyword>
<keyword id="KW-0934">Plastid</keyword>
<keyword id="KW-0793">Thylakoid</keyword>
<keyword id="KW-0812">Transmembrane</keyword>
<keyword id="KW-1133">Transmembrane helix</keyword>
<keyword id="KW-0813">Transport</keyword>
<name>PSBD_OENPA</name>
<geneLocation type="chloroplast"/>
<sequence length="353" mass="39578">MTIALGKFTKDEKDLFDIMDDWLRRDRFVFVGWSGLLLFPCAYFALGGWFTGTTFVTSWYTHGLASSYLEGCNFLTAAVSTPANSLAHSLLLLWGPEAQGDFTRWCQLGGLWTFVALHGAFALIGFMLRQFEIARSVQLRPYNAIAFSGPIAVFVSVFLIYPLGQSGWFFAPSFGVAAIFRFILFFQGFHNWTLNPFHMMGVAGVLGAALLCAIHGATVENTLFEDGDGANTFRAFNPTQAEETYSMVTANRFWSQIFGVAFSNKRWLHFFMLFVPVTGLWMSALGVVGLALNLRAYDFVSQEIRAAEDPEFETFYTKNILLNEGIRAWMAAQDQPHENLIFPEEVLPRGNAL</sequence>
<organism>
    <name type="scientific">Oenothera parviflora</name>
    <name type="common">Small-flowered evening primrose</name>
    <name type="synonym">Oenothera cruciata</name>
    <dbReference type="NCBI Taxonomy" id="482429"/>
    <lineage>
        <taxon>Eukaryota</taxon>
        <taxon>Viridiplantae</taxon>
        <taxon>Streptophyta</taxon>
        <taxon>Embryophyta</taxon>
        <taxon>Tracheophyta</taxon>
        <taxon>Spermatophyta</taxon>
        <taxon>Magnoliopsida</taxon>
        <taxon>eudicotyledons</taxon>
        <taxon>Gunneridae</taxon>
        <taxon>Pentapetalae</taxon>
        <taxon>rosids</taxon>
        <taxon>malvids</taxon>
        <taxon>Myrtales</taxon>
        <taxon>Onagraceae</taxon>
        <taxon>Onagroideae</taxon>
        <taxon>Onagreae</taxon>
        <taxon>Oenothera</taxon>
    </lineage>
</organism>
<proteinExistence type="inferred from homology"/>
<gene>
    <name evidence="2" type="primary">psbD</name>
</gene>
<feature type="initiator methionine" description="Removed" evidence="1">
    <location>
        <position position="1"/>
    </location>
</feature>
<feature type="chain" id="PRO_0000359678" description="Photosystem II D2 protein">
    <location>
        <begin position="2"/>
        <end position="353"/>
    </location>
</feature>
<feature type="transmembrane region" description="Helical" evidence="2">
    <location>
        <begin position="41"/>
        <end position="61"/>
    </location>
</feature>
<feature type="transmembrane region" description="Helical" evidence="2">
    <location>
        <begin position="125"/>
        <end position="141"/>
    </location>
</feature>
<feature type="transmembrane region" description="Helical" evidence="2">
    <location>
        <begin position="153"/>
        <end position="166"/>
    </location>
</feature>
<feature type="transmembrane region" description="Helical" evidence="2">
    <location>
        <begin position="208"/>
        <end position="228"/>
    </location>
</feature>
<feature type="transmembrane region" description="Helical" evidence="2">
    <location>
        <begin position="279"/>
        <end position="295"/>
    </location>
</feature>
<feature type="binding site" description="axial binding residue" evidence="2">
    <location>
        <position position="118"/>
    </location>
    <ligand>
        <name>chlorophyll a</name>
        <dbReference type="ChEBI" id="CHEBI:58416"/>
        <label>ChlzD2</label>
    </ligand>
    <ligandPart>
        <name>Mg</name>
        <dbReference type="ChEBI" id="CHEBI:25107"/>
    </ligandPart>
</feature>
<feature type="binding site" evidence="2">
    <location>
        <position position="130"/>
    </location>
    <ligand>
        <name>pheophytin a</name>
        <dbReference type="ChEBI" id="CHEBI:136840"/>
        <label>D2</label>
    </ligand>
</feature>
<feature type="binding site" evidence="2">
    <location>
        <position position="143"/>
    </location>
    <ligand>
        <name>pheophytin a</name>
        <dbReference type="ChEBI" id="CHEBI:136840"/>
        <label>D2</label>
    </ligand>
</feature>
<feature type="binding site" description="axial binding residue" evidence="2">
    <location>
        <position position="198"/>
    </location>
    <ligand>
        <name>chlorophyll a</name>
        <dbReference type="ChEBI" id="CHEBI:58416"/>
        <label>PD2</label>
    </ligand>
    <ligandPart>
        <name>Mg</name>
        <dbReference type="ChEBI" id="CHEBI:25107"/>
    </ligandPart>
</feature>
<feature type="binding site" evidence="2">
    <location>
        <position position="215"/>
    </location>
    <ligand>
        <name>a plastoquinone</name>
        <dbReference type="ChEBI" id="CHEBI:17757"/>
        <label>Q(A)</label>
    </ligand>
</feature>
<feature type="binding site" evidence="2">
    <location>
        <position position="215"/>
    </location>
    <ligand>
        <name>Fe cation</name>
        <dbReference type="ChEBI" id="CHEBI:24875"/>
        <note>ligand shared with heterodimeric partner</note>
    </ligand>
</feature>
<feature type="binding site" evidence="2">
    <location>
        <position position="262"/>
    </location>
    <ligand>
        <name>a plastoquinone</name>
        <dbReference type="ChEBI" id="CHEBI:17757"/>
        <label>Q(A)</label>
    </ligand>
</feature>
<feature type="binding site" evidence="2">
    <location>
        <position position="269"/>
    </location>
    <ligand>
        <name>Fe cation</name>
        <dbReference type="ChEBI" id="CHEBI:24875"/>
        <note>ligand shared with heterodimeric partner</note>
    </ligand>
</feature>
<feature type="modified residue" description="N-acetylthreonine" evidence="1">
    <location>
        <position position="2"/>
    </location>
</feature>
<feature type="modified residue" description="Phosphothreonine" evidence="1">
    <location>
        <position position="2"/>
    </location>
</feature>
<comment type="function">
    <text evidence="2">Photosystem II (PSII) is a light-driven water:plastoquinone oxidoreductase that uses light energy to abstract electrons from H(2)O, generating O(2) and a proton gradient subsequently used for ATP formation. It consists of a core antenna complex that captures photons, and an electron transfer chain that converts photonic excitation into a charge separation. The D1/D2 (PsbA/PsbD) reaction center heterodimer binds P680, the primary electron donor of PSII as well as several subsequent electron acceptors. D2 is needed for assembly of a stable PSII complex.</text>
</comment>
<comment type="catalytic activity">
    <reaction evidence="2">
        <text>2 a plastoquinone + 4 hnu + 2 H2O = 2 a plastoquinol + O2</text>
        <dbReference type="Rhea" id="RHEA:36359"/>
        <dbReference type="Rhea" id="RHEA-COMP:9561"/>
        <dbReference type="Rhea" id="RHEA-COMP:9562"/>
        <dbReference type="ChEBI" id="CHEBI:15377"/>
        <dbReference type="ChEBI" id="CHEBI:15379"/>
        <dbReference type="ChEBI" id="CHEBI:17757"/>
        <dbReference type="ChEBI" id="CHEBI:30212"/>
        <dbReference type="ChEBI" id="CHEBI:62192"/>
        <dbReference type="EC" id="1.10.3.9"/>
    </reaction>
</comment>
<comment type="cofactor">
    <text evidence="2">The D1/D2 heterodimer binds P680, chlorophylls that are the primary electron donor of PSII, and subsequent electron acceptors. It shares a non-heme iron and each subunit binds pheophytin, quinone, additional chlorophylls, carotenoids and lipids. There is also a Cl(-1) ion associated with D1 and D2, which is required for oxygen evolution. The PSII complex binds additional chlorophylls, carotenoids and specific lipids.</text>
</comment>
<comment type="subunit">
    <text evidence="2">PSII is composed of 1 copy each of membrane proteins PsbA, PsbB, PsbC, PsbD, PsbE, PsbF, PsbH, PsbI, PsbJ, PsbK, PsbL, PsbM, PsbT, PsbX, PsbY, PsbZ, Psb30/Ycf12, at least 3 peripheral proteins of the oxygen-evolving complex and a large number of cofactors. It forms dimeric complexes.</text>
</comment>
<comment type="subcellular location">
    <subcellularLocation>
        <location evidence="2">Plastid</location>
        <location evidence="2">Chloroplast thylakoid membrane</location>
        <topology evidence="2">Multi-pass membrane protein</topology>
    </subcellularLocation>
</comment>
<comment type="miscellaneous">
    <text evidence="2">2 of the reaction center chlorophylls (ChlD1 and ChlD2) are entirely coordinated by water.</text>
</comment>
<comment type="similarity">
    <text evidence="2">Belongs to the reaction center PufL/M/PsbA/D family.</text>
</comment>